<sequence length="160" mass="18739">MARPRPAEFEKKKVVAENRRARFDYFLEQFFEAGIALTGTEVKSLRFGEGSIAESYAEVKDDQVWLVNSNVPEFSHGNRFNHEPKRPRKLLLHAREIDKMRNGVSREGMTLIPLSIYFNGRGRAKVELALAKGKKLHDKRDTEKERDWKREQQRLLRDRG</sequence>
<dbReference type="EMBL" id="CP000699">
    <property type="protein sequence ID" value="ABQ66884.1"/>
    <property type="molecule type" value="Genomic_DNA"/>
</dbReference>
<dbReference type="SMR" id="A5V3L8"/>
<dbReference type="STRING" id="392499.Swit_0516"/>
<dbReference type="PaxDb" id="392499-Swit_0516"/>
<dbReference type="KEGG" id="swi:Swit_0516"/>
<dbReference type="eggNOG" id="COG0691">
    <property type="taxonomic scope" value="Bacteria"/>
</dbReference>
<dbReference type="HOGENOM" id="CLU_108953_0_1_5"/>
<dbReference type="OrthoDB" id="9805462at2"/>
<dbReference type="Proteomes" id="UP000001989">
    <property type="component" value="Chromosome"/>
</dbReference>
<dbReference type="GO" id="GO:0005829">
    <property type="term" value="C:cytosol"/>
    <property type="evidence" value="ECO:0007669"/>
    <property type="project" value="TreeGrafter"/>
</dbReference>
<dbReference type="GO" id="GO:0003723">
    <property type="term" value="F:RNA binding"/>
    <property type="evidence" value="ECO:0007669"/>
    <property type="project" value="UniProtKB-UniRule"/>
</dbReference>
<dbReference type="GO" id="GO:0070929">
    <property type="term" value="P:trans-translation"/>
    <property type="evidence" value="ECO:0007669"/>
    <property type="project" value="UniProtKB-UniRule"/>
</dbReference>
<dbReference type="CDD" id="cd09294">
    <property type="entry name" value="SmpB"/>
    <property type="match status" value="1"/>
</dbReference>
<dbReference type="Gene3D" id="2.40.280.10">
    <property type="match status" value="1"/>
</dbReference>
<dbReference type="HAMAP" id="MF_00023">
    <property type="entry name" value="SmpB"/>
    <property type="match status" value="1"/>
</dbReference>
<dbReference type="InterPro" id="IPR023620">
    <property type="entry name" value="SmpB"/>
</dbReference>
<dbReference type="InterPro" id="IPR000037">
    <property type="entry name" value="SsrA-bd_prot"/>
</dbReference>
<dbReference type="InterPro" id="IPR020081">
    <property type="entry name" value="SsrA-bd_prot_CS"/>
</dbReference>
<dbReference type="NCBIfam" id="NF003843">
    <property type="entry name" value="PRK05422.1"/>
    <property type="match status" value="1"/>
</dbReference>
<dbReference type="NCBIfam" id="TIGR00086">
    <property type="entry name" value="smpB"/>
    <property type="match status" value="1"/>
</dbReference>
<dbReference type="PANTHER" id="PTHR30308:SF2">
    <property type="entry name" value="SSRA-BINDING PROTEIN"/>
    <property type="match status" value="1"/>
</dbReference>
<dbReference type="PANTHER" id="PTHR30308">
    <property type="entry name" value="TMRNA-BINDING COMPONENT OF TRANS-TRANSLATION TAGGING COMPLEX"/>
    <property type="match status" value="1"/>
</dbReference>
<dbReference type="Pfam" id="PF01668">
    <property type="entry name" value="SmpB"/>
    <property type="match status" value="1"/>
</dbReference>
<dbReference type="SUPFAM" id="SSF74982">
    <property type="entry name" value="Small protein B (SmpB)"/>
    <property type="match status" value="1"/>
</dbReference>
<dbReference type="PROSITE" id="PS01317">
    <property type="entry name" value="SSRP"/>
    <property type="match status" value="1"/>
</dbReference>
<name>SSRP_RHIWR</name>
<feature type="chain" id="PRO_1000002154" description="SsrA-binding protein">
    <location>
        <begin position="1"/>
        <end position="160"/>
    </location>
</feature>
<feature type="region of interest" description="Disordered" evidence="2">
    <location>
        <begin position="133"/>
        <end position="160"/>
    </location>
</feature>
<feature type="compositionally biased region" description="Basic and acidic residues" evidence="2">
    <location>
        <begin position="138"/>
        <end position="160"/>
    </location>
</feature>
<accession>A5V3L8</accession>
<organism>
    <name type="scientific">Rhizorhabdus wittichii (strain DSM 6014 / CCUG 31198 / JCM 15750 / NBRC 105917 / EY 4224 / RW1)</name>
    <name type="common">Sphingomonas wittichii</name>
    <dbReference type="NCBI Taxonomy" id="392499"/>
    <lineage>
        <taxon>Bacteria</taxon>
        <taxon>Pseudomonadati</taxon>
        <taxon>Pseudomonadota</taxon>
        <taxon>Alphaproteobacteria</taxon>
        <taxon>Sphingomonadales</taxon>
        <taxon>Sphingomonadaceae</taxon>
        <taxon>Rhizorhabdus</taxon>
    </lineage>
</organism>
<gene>
    <name evidence="1" type="primary">smpB</name>
    <name type="ordered locus">Swit_0516</name>
</gene>
<reference key="1">
    <citation type="journal article" date="2010" name="J. Bacteriol.">
        <title>Genome sequence of the dioxin-mineralizing bacterium Sphingomonas wittichii RW1.</title>
        <authorList>
            <person name="Miller T.R."/>
            <person name="Delcher A.L."/>
            <person name="Salzberg S.L."/>
            <person name="Saunders E."/>
            <person name="Detter J.C."/>
            <person name="Halden R.U."/>
        </authorList>
    </citation>
    <scope>NUCLEOTIDE SEQUENCE [LARGE SCALE GENOMIC DNA]</scope>
    <source>
        <strain>DSM 6014 / CCUG 31198 / JCM 15750 / NBRC 105917 / EY 4224 / RW1</strain>
    </source>
</reference>
<keyword id="KW-0963">Cytoplasm</keyword>
<keyword id="KW-1185">Reference proteome</keyword>
<keyword id="KW-0694">RNA-binding</keyword>
<evidence type="ECO:0000255" key="1">
    <source>
        <dbReference type="HAMAP-Rule" id="MF_00023"/>
    </source>
</evidence>
<evidence type="ECO:0000256" key="2">
    <source>
        <dbReference type="SAM" id="MobiDB-lite"/>
    </source>
</evidence>
<protein>
    <recommendedName>
        <fullName evidence="1">SsrA-binding protein</fullName>
    </recommendedName>
    <alternativeName>
        <fullName evidence="1">Small protein B</fullName>
    </alternativeName>
</protein>
<proteinExistence type="inferred from homology"/>
<comment type="function">
    <text evidence="1">Required for rescue of stalled ribosomes mediated by trans-translation. Binds to transfer-messenger RNA (tmRNA), required for stable association of tmRNA with ribosomes. tmRNA and SmpB together mimic tRNA shape, replacing the anticodon stem-loop with SmpB. tmRNA is encoded by the ssrA gene; the 2 termini fold to resemble tRNA(Ala) and it encodes a 'tag peptide', a short internal open reading frame. During trans-translation Ala-aminoacylated tmRNA acts like a tRNA, entering the A-site of stalled ribosomes, displacing the stalled mRNA. The ribosome then switches to translate the ORF on the tmRNA; the nascent peptide is terminated with the 'tag peptide' encoded by the tmRNA and targeted for degradation. The ribosome is freed to recommence translation, which seems to be the essential function of trans-translation.</text>
</comment>
<comment type="subcellular location">
    <subcellularLocation>
        <location evidence="1">Cytoplasm</location>
    </subcellularLocation>
    <text evidence="1">The tmRNA-SmpB complex associates with stalled 70S ribosomes.</text>
</comment>
<comment type="similarity">
    <text evidence="1">Belongs to the SmpB family.</text>
</comment>